<accession>Q7A7R9</accession>
<sequence>MNFNDIETMVKSKFKDIKKHAEEIAHEIEVRSGYLRKAEQYKRLEFNLSIALDDVESTAKDVQTAKSSANKDSVSVKGKAPNTLYIEKRNLMKQKLEMLGEDIDKNKESLQKAKGIAGEKASEYFNKAMN</sequence>
<name>ESXC_STAAN</name>
<proteinExistence type="inferred from homology"/>
<feature type="chain" id="PRO_0000087052" description="ESAT-6 secretion system extracellular protein C">
    <location>
        <begin position="1"/>
        <end position="130"/>
    </location>
</feature>
<dbReference type="EMBL" id="BA000018">
    <property type="protein sequence ID" value="BAB41501.1"/>
    <property type="molecule type" value="Genomic_DNA"/>
</dbReference>
<dbReference type="PIR" id="B89793">
    <property type="entry name" value="B89793"/>
</dbReference>
<dbReference type="RefSeq" id="WP_001010292.1">
    <property type="nucleotide sequence ID" value="NC_002745.2"/>
</dbReference>
<dbReference type="SMR" id="Q7A7R9"/>
<dbReference type="EnsemblBacteria" id="BAB41501">
    <property type="protein sequence ID" value="BAB41501"/>
    <property type="gene ID" value="BAB41501"/>
</dbReference>
<dbReference type="KEGG" id="sau:SA0277"/>
<dbReference type="HOGENOM" id="CLU_1936813_0_0_9"/>
<dbReference type="GO" id="GO:0005576">
    <property type="term" value="C:extracellular region"/>
    <property type="evidence" value="ECO:0007669"/>
    <property type="project" value="UniProtKB-SubCell"/>
</dbReference>
<gene>
    <name evidence="1" type="primary">esxC</name>
    <name evidence="2" type="synonym">esaC</name>
    <name type="ordered locus">SA0277</name>
</gene>
<keyword id="KW-0964">Secreted</keyword>
<keyword id="KW-0843">Virulence</keyword>
<organism>
    <name type="scientific">Staphylococcus aureus (strain N315)</name>
    <dbReference type="NCBI Taxonomy" id="158879"/>
    <lineage>
        <taxon>Bacteria</taxon>
        <taxon>Bacillati</taxon>
        <taxon>Bacillota</taxon>
        <taxon>Bacilli</taxon>
        <taxon>Bacillales</taxon>
        <taxon>Staphylococcaceae</taxon>
        <taxon>Staphylococcus</taxon>
    </lineage>
</organism>
<protein>
    <recommendedName>
        <fullName evidence="2">ESAT-6 secretion system extracellular protein C</fullName>
        <shortName evidence="2">Ess extracellular protein C</shortName>
    </recommendedName>
</protein>
<comment type="subcellular location">
    <subcellularLocation>
        <location evidence="2">Secreted</location>
    </subcellularLocation>
    <text evidence="2">Secreted via the ESAT-6 secretion system (Ess) / type VII secretion system (T7SS).</text>
</comment>
<comment type="similarity">
    <text evidence="3">Belongs to the EsxC family.</text>
</comment>
<evidence type="ECO:0000250" key="1">
    <source>
        <dbReference type="UniProtKB" id="A0A0H2XIK2"/>
    </source>
</evidence>
<evidence type="ECO:0000250" key="2">
    <source>
        <dbReference type="UniProtKB" id="P0C051"/>
    </source>
</evidence>
<evidence type="ECO:0000305" key="3"/>
<reference key="1">
    <citation type="journal article" date="2001" name="Lancet">
        <title>Whole genome sequencing of meticillin-resistant Staphylococcus aureus.</title>
        <authorList>
            <person name="Kuroda M."/>
            <person name="Ohta T."/>
            <person name="Uchiyama I."/>
            <person name="Baba T."/>
            <person name="Yuzawa H."/>
            <person name="Kobayashi I."/>
            <person name="Cui L."/>
            <person name="Oguchi A."/>
            <person name="Aoki K."/>
            <person name="Nagai Y."/>
            <person name="Lian J.-Q."/>
            <person name="Ito T."/>
            <person name="Kanamori M."/>
            <person name="Matsumaru H."/>
            <person name="Maruyama A."/>
            <person name="Murakami H."/>
            <person name="Hosoyama A."/>
            <person name="Mizutani-Ui Y."/>
            <person name="Takahashi N.K."/>
            <person name="Sawano T."/>
            <person name="Inoue R."/>
            <person name="Kaito C."/>
            <person name="Sekimizu K."/>
            <person name="Hirakawa H."/>
            <person name="Kuhara S."/>
            <person name="Goto S."/>
            <person name="Yabuzaki J."/>
            <person name="Kanehisa M."/>
            <person name="Yamashita A."/>
            <person name="Oshima K."/>
            <person name="Furuya K."/>
            <person name="Yoshino C."/>
            <person name="Shiba T."/>
            <person name="Hattori M."/>
            <person name="Ogasawara N."/>
            <person name="Hayashi H."/>
            <person name="Hiramatsu K."/>
        </authorList>
    </citation>
    <scope>NUCLEOTIDE SEQUENCE [LARGE SCALE GENOMIC DNA]</scope>
    <source>
        <strain>N315</strain>
    </source>
</reference>